<evidence type="ECO:0000255" key="1">
    <source>
        <dbReference type="HAMAP-Rule" id="MF_00485"/>
    </source>
</evidence>
<evidence type="ECO:0000305" key="2"/>
<proteinExistence type="inferred from homology"/>
<organism>
    <name type="scientific">Methanosarcina barkeri (strain Fusaro / DSM 804)</name>
    <dbReference type="NCBI Taxonomy" id="269797"/>
    <lineage>
        <taxon>Archaea</taxon>
        <taxon>Methanobacteriati</taxon>
        <taxon>Methanobacteriota</taxon>
        <taxon>Stenosarchaea group</taxon>
        <taxon>Methanomicrobia</taxon>
        <taxon>Methanosarcinales</taxon>
        <taxon>Methanosarcinaceae</taxon>
        <taxon>Methanosarcina</taxon>
    </lineage>
</organism>
<name>RS4E_METBF</name>
<feature type="chain" id="PRO_1000081337" description="Small ribosomal subunit protein eS4">
    <location>
        <begin position="1"/>
        <end position="235"/>
    </location>
</feature>
<feature type="domain" description="S4 RNA-binding" evidence="1">
    <location>
        <begin position="37"/>
        <end position="100"/>
    </location>
</feature>
<gene>
    <name evidence="1" type="primary">rps4e</name>
    <name type="ordered locus">Mbar_A0098</name>
</gene>
<protein>
    <recommendedName>
        <fullName evidence="1">Small ribosomal subunit protein eS4</fullName>
    </recommendedName>
    <alternativeName>
        <fullName evidence="2">30S ribosomal protein S4e</fullName>
    </alternativeName>
</protein>
<accession>Q46GA7</accession>
<keyword id="KW-0687">Ribonucleoprotein</keyword>
<keyword id="KW-0689">Ribosomal protein</keyword>
<keyword id="KW-0694">RNA-binding</keyword>
<keyword id="KW-0699">rRNA-binding</keyword>
<comment type="similarity">
    <text evidence="1">Belongs to the eukaryotic ribosomal protein eS4 family.</text>
</comment>
<reference key="1">
    <citation type="journal article" date="2006" name="J. Bacteriol.">
        <title>The Methanosarcina barkeri genome: comparative analysis with Methanosarcina acetivorans and Methanosarcina mazei reveals extensive rearrangement within methanosarcinal genomes.</title>
        <authorList>
            <person name="Maeder D.L."/>
            <person name="Anderson I."/>
            <person name="Brettin T.S."/>
            <person name="Bruce D.C."/>
            <person name="Gilna P."/>
            <person name="Han C.S."/>
            <person name="Lapidus A."/>
            <person name="Metcalf W.W."/>
            <person name="Saunders E."/>
            <person name="Tapia R."/>
            <person name="Sowers K.R."/>
        </authorList>
    </citation>
    <scope>NUCLEOTIDE SEQUENCE [LARGE SCALE GENOMIC DNA]</scope>
    <source>
        <strain>Fusaro / DSM 804</strain>
    </source>
</reference>
<sequence>MTHQKRLSIPRSWKAGKKGYKWVSTTRPGPHSQARSLPLGIIIRDILKLVDNSREGKRILSEGKVLVDGIPRKDLRFPVGLFDVITLPLVNETYRMFQDEKGRLALHKLNATNVNKLCRINNKTTLKGGKVQLNLNDGTNILGSNEYSTKDSLILSLPDKQIVKHLQFKVGNLAMVVGGQHSGEIGKITEIREVKSSRHNTVAISGETDFETIEDYVIVIGEDKPEIRLGGEVIE</sequence>
<dbReference type="EMBL" id="CP000099">
    <property type="protein sequence ID" value="AAZ69085.1"/>
    <property type="molecule type" value="Genomic_DNA"/>
</dbReference>
<dbReference type="SMR" id="Q46GA7"/>
<dbReference type="STRING" id="269797.Mbar_A0098"/>
<dbReference type="PaxDb" id="269797-Mbar_A0098"/>
<dbReference type="KEGG" id="mba:Mbar_A0098"/>
<dbReference type="eggNOG" id="arCOG04093">
    <property type="taxonomic scope" value="Archaea"/>
</dbReference>
<dbReference type="HOGENOM" id="CLU_060400_0_0_2"/>
<dbReference type="OrthoDB" id="372073at2157"/>
<dbReference type="GO" id="GO:0022627">
    <property type="term" value="C:cytosolic small ribosomal subunit"/>
    <property type="evidence" value="ECO:0007669"/>
    <property type="project" value="TreeGrafter"/>
</dbReference>
<dbReference type="GO" id="GO:0019843">
    <property type="term" value="F:rRNA binding"/>
    <property type="evidence" value="ECO:0007669"/>
    <property type="project" value="UniProtKB-KW"/>
</dbReference>
<dbReference type="GO" id="GO:0003735">
    <property type="term" value="F:structural constituent of ribosome"/>
    <property type="evidence" value="ECO:0007669"/>
    <property type="project" value="InterPro"/>
</dbReference>
<dbReference type="GO" id="GO:0006412">
    <property type="term" value="P:translation"/>
    <property type="evidence" value="ECO:0007669"/>
    <property type="project" value="UniProtKB-UniRule"/>
</dbReference>
<dbReference type="CDD" id="cd06087">
    <property type="entry name" value="KOW_RPS4"/>
    <property type="match status" value="1"/>
</dbReference>
<dbReference type="FunFam" id="3.10.290.10:FF:000002">
    <property type="entry name" value="40S ribosomal protein S4"/>
    <property type="match status" value="1"/>
</dbReference>
<dbReference type="Gene3D" id="2.30.30.30">
    <property type="match status" value="1"/>
</dbReference>
<dbReference type="Gene3D" id="2.40.50.740">
    <property type="match status" value="1"/>
</dbReference>
<dbReference type="Gene3D" id="3.10.290.10">
    <property type="entry name" value="RNA-binding S4 domain"/>
    <property type="match status" value="1"/>
</dbReference>
<dbReference type="HAMAP" id="MF_00485">
    <property type="entry name" value="Ribosomal_eS4"/>
    <property type="match status" value="1"/>
</dbReference>
<dbReference type="InterPro" id="IPR005824">
    <property type="entry name" value="KOW"/>
</dbReference>
<dbReference type="InterPro" id="IPR014722">
    <property type="entry name" value="Rib_uL2_dom2"/>
</dbReference>
<dbReference type="InterPro" id="IPR000876">
    <property type="entry name" value="Ribosomal_eS4"/>
</dbReference>
<dbReference type="InterPro" id="IPR013845">
    <property type="entry name" value="Ribosomal_eS4_central_region"/>
</dbReference>
<dbReference type="InterPro" id="IPR038237">
    <property type="entry name" value="Ribosomal_eS4_central_sf"/>
</dbReference>
<dbReference type="InterPro" id="IPR041982">
    <property type="entry name" value="Ribosomal_eS4_KOW"/>
</dbReference>
<dbReference type="InterPro" id="IPR013843">
    <property type="entry name" value="Ribosomal_eS4_N"/>
</dbReference>
<dbReference type="InterPro" id="IPR036986">
    <property type="entry name" value="S4_RNA-bd_sf"/>
</dbReference>
<dbReference type="NCBIfam" id="NF003312">
    <property type="entry name" value="PRK04313.1"/>
    <property type="match status" value="1"/>
</dbReference>
<dbReference type="PANTHER" id="PTHR11581">
    <property type="entry name" value="30S/40S RIBOSOMAL PROTEIN S4"/>
    <property type="match status" value="1"/>
</dbReference>
<dbReference type="PANTHER" id="PTHR11581:SF0">
    <property type="entry name" value="SMALL RIBOSOMAL SUBUNIT PROTEIN ES4"/>
    <property type="match status" value="1"/>
</dbReference>
<dbReference type="Pfam" id="PF00900">
    <property type="entry name" value="Ribosomal_S4e"/>
    <property type="match status" value="1"/>
</dbReference>
<dbReference type="Pfam" id="PF08071">
    <property type="entry name" value="RS4NT"/>
    <property type="match status" value="1"/>
</dbReference>
<dbReference type="PIRSF" id="PIRSF002116">
    <property type="entry name" value="Ribosomal_S4"/>
    <property type="match status" value="1"/>
</dbReference>
<dbReference type="SMART" id="SM00739">
    <property type="entry name" value="KOW"/>
    <property type="match status" value="1"/>
</dbReference>
<dbReference type="SUPFAM" id="SSF55174">
    <property type="entry name" value="Alpha-L RNA-binding motif"/>
    <property type="match status" value="1"/>
</dbReference>
<dbReference type="PROSITE" id="PS50889">
    <property type="entry name" value="S4"/>
    <property type="match status" value="1"/>
</dbReference>